<evidence type="ECO:0000255" key="1">
    <source>
        <dbReference type="HAMAP-Rule" id="MF_00181"/>
    </source>
</evidence>
<name>AMPA_ALCBS</name>
<organism>
    <name type="scientific">Alcanivorax borkumensis (strain ATCC 700651 / DSM 11573 / NCIMB 13689 / SK2)</name>
    <dbReference type="NCBI Taxonomy" id="393595"/>
    <lineage>
        <taxon>Bacteria</taxon>
        <taxon>Pseudomonadati</taxon>
        <taxon>Pseudomonadota</taxon>
        <taxon>Gammaproteobacteria</taxon>
        <taxon>Oceanospirillales</taxon>
        <taxon>Alcanivoracaceae</taxon>
        <taxon>Alcanivorax</taxon>
    </lineage>
</organism>
<accession>Q0VSA5</accession>
<feature type="chain" id="PRO_1000071653" description="Probable cytosol aminopeptidase">
    <location>
        <begin position="1"/>
        <end position="489"/>
    </location>
</feature>
<feature type="active site" evidence="1">
    <location>
        <position position="272"/>
    </location>
</feature>
<feature type="active site" evidence="1">
    <location>
        <position position="346"/>
    </location>
</feature>
<feature type="binding site" evidence="1">
    <location>
        <position position="260"/>
    </location>
    <ligand>
        <name>Mn(2+)</name>
        <dbReference type="ChEBI" id="CHEBI:29035"/>
        <label>2</label>
    </ligand>
</feature>
<feature type="binding site" evidence="1">
    <location>
        <position position="265"/>
    </location>
    <ligand>
        <name>Mn(2+)</name>
        <dbReference type="ChEBI" id="CHEBI:29035"/>
        <label>1</label>
    </ligand>
</feature>
<feature type="binding site" evidence="1">
    <location>
        <position position="265"/>
    </location>
    <ligand>
        <name>Mn(2+)</name>
        <dbReference type="ChEBI" id="CHEBI:29035"/>
        <label>2</label>
    </ligand>
</feature>
<feature type="binding site" evidence="1">
    <location>
        <position position="283"/>
    </location>
    <ligand>
        <name>Mn(2+)</name>
        <dbReference type="ChEBI" id="CHEBI:29035"/>
        <label>2</label>
    </ligand>
</feature>
<feature type="binding site" evidence="1">
    <location>
        <position position="342"/>
    </location>
    <ligand>
        <name>Mn(2+)</name>
        <dbReference type="ChEBI" id="CHEBI:29035"/>
        <label>1</label>
    </ligand>
</feature>
<feature type="binding site" evidence="1">
    <location>
        <position position="344"/>
    </location>
    <ligand>
        <name>Mn(2+)</name>
        <dbReference type="ChEBI" id="CHEBI:29035"/>
        <label>1</label>
    </ligand>
</feature>
<feature type="binding site" evidence="1">
    <location>
        <position position="344"/>
    </location>
    <ligand>
        <name>Mn(2+)</name>
        <dbReference type="ChEBI" id="CHEBI:29035"/>
        <label>2</label>
    </ligand>
</feature>
<protein>
    <recommendedName>
        <fullName evidence="1">Probable cytosol aminopeptidase</fullName>
        <ecNumber evidence="1">3.4.11.1</ecNumber>
    </recommendedName>
    <alternativeName>
        <fullName evidence="1">Leucine aminopeptidase</fullName>
        <shortName evidence="1">LAP</shortName>
        <ecNumber evidence="1">3.4.11.10</ecNumber>
    </alternativeName>
    <alternativeName>
        <fullName evidence="1">Leucyl aminopeptidase</fullName>
    </alternativeName>
</protein>
<proteinExistence type="inferred from homology"/>
<sequence length="489" mass="52501">MDFAVSNRPLEKSKADALVVLLGKKNDLPQALPSATREQISQFTKAGDFNASKGQLVWLHAPQDLNADRLLLVGTGDSPLSDQGWLSLVHKATKTLASSPVKQAMWLLDDTHTQTLEWQVREGSRVVEESTYRFDNYRSKPAPASNLAKLTFWHAEKDTTLTKAHKTGKAVGLGVNVARDLGNLPPNDCYPEYLSGVARDLGKEYEKLTVKVLSQAQAEKMGMGAFHAVAKGSERQGQIIVMEYKGAKPTKQGPVALVGKGITFDTGGISLKPGATMDEMKYDMGGAASVFGSVKTVCELDLPIHLVAVVAAAENMPDGRAARPGDIVKTLSGQTVEILNTDAEGRLVLCDALTYVQQKHKPHTVIDIATLTGACVVALGAHAQAVYSNDDDLSEALLAAGKETGDRGWPMPLWDEYQGQLDSPFADMQNIGGPKAGSITAACFLSRFTKEVKWAHLDIAGTAWISGGMSKGATGRPVPMLTRYLMDNA</sequence>
<keyword id="KW-0031">Aminopeptidase</keyword>
<keyword id="KW-0963">Cytoplasm</keyword>
<keyword id="KW-0378">Hydrolase</keyword>
<keyword id="KW-0464">Manganese</keyword>
<keyword id="KW-0479">Metal-binding</keyword>
<keyword id="KW-0645">Protease</keyword>
<keyword id="KW-1185">Reference proteome</keyword>
<comment type="function">
    <text evidence="1">Presumably involved in the processing and regular turnover of intracellular proteins. Catalyzes the removal of unsubstituted N-terminal amino acids from various peptides.</text>
</comment>
<comment type="catalytic activity">
    <reaction evidence="1">
        <text>Release of an N-terminal amino acid, Xaa-|-Yaa-, in which Xaa is preferably Leu, but may be other amino acids including Pro although not Arg or Lys, and Yaa may be Pro. Amino acid amides and methyl esters are also readily hydrolyzed, but rates on arylamides are exceedingly low.</text>
        <dbReference type="EC" id="3.4.11.1"/>
    </reaction>
</comment>
<comment type="catalytic activity">
    <reaction evidence="1">
        <text>Release of an N-terminal amino acid, preferentially leucine, but not glutamic or aspartic acids.</text>
        <dbReference type="EC" id="3.4.11.10"/>
    </reaction>
</comment>
<comment type="cofactor">
    <cofactor evidence="1">
        <name>Mn(2+)</name>
        <dbReference type="ChEBI" id="CHEBI:29035"/>
    </cofactor>
    <text evidence="1">Binds 2 manganese ions per subunit.</text>
</comment>
<comment type="subcellular location">
    <subcellularLocation>
        <location evidence="1">Cytoplasm</location>
    </subcellularLocation>
</comment>
<comment type="similarity">
    <text evidence="1">Belongs to the peptidase M17 family.</text>
</comment>
<reference key="1">
    <citation type="journal article" date="2006" name="Nat. Biotechnol.">
        <title>Genome sequence of the ubiquitous hydrocarbon-degrading marine bacterium Alcanivorax borkumensis.</title>
        <authorList>
            <person name="Schneiker S."/>
            <person name="Martins dos Santos V.A.P."/>
            <person name="Bartels D."/>
            <person name="Bekel T."/>
            <person name="Brecht M."/>
            <person name="Buhrmester J."/>
            <person name="Chernikova T.N."/>
            <person name="Denaro R."/>
            <person name="Ferrer M."/>
            <person name="Gertler C."/>
            <person name="Goesmann A."/>
            <person name="Golyshina O.V."/>
            <person name="Kaminski F."/>
            <person name="Khachane A.N."/>
            <person name="Lang S."/>
            <person name="Linke B."/>
            <person name="McHardy A.C."/>
            <person name="Meyer F."/>
            <person name="Nechitaylo T."/>
            <person name="Puehler A."/>
            <person name="Regenhardt D."/>
            <person name="Rupp O."/>
            <person name="Sabirova J.S."/>
            <person name="Selbitschka W."/>
            <person name="Yakimov M.M."/>
            <person name="Timmis K.N."/>
            <person name="Vorhoelter F.-J."/>
            <person name="Weidner S."/>
            <person name="Kaiser O."/>
            <person name="Golyshin P.N."/>
        </authorList>
    </citation>
    <scope>NUCLEOTIDE SEQUENCE [LARGE SCALE GENOMIC DNA]</scope>
    <source>
        <strain>ATCC 700651 / DSM 11573 / NCIMB 13689 / SK2</strain>
    </source>
</reference>
<dbReference type="EC" id="3.4.11.1" evidence="1"/>
<dbReference type="EC" id="3.4.11.10" evidence="1"/>
<dbReference type="EMBL" id="AM286690">
    <property type="protein sequence ID" value="CAL15943.1"/>
    <property type="molecule type" value="Genomic_DNA"/>
</dbReference>
<dbReference type="RefSeq" id="WP_011587781.1">
    <property type="nucleotide sequence ID" value="NC_008260.1"/>
</dbReference>
<dbReference type="SMR" id="Q0VSA5"/>
<dbReference type="STRING" id="393595.ABO_0495"/>
<dbReference type="MEROPS" id="M17.003"/>
<dbReference type="KEGG" id="abo:ABO_0495"/>
<dbReference type="eggNOG" id="COG0260">
    <property type="taxonomic scope" value="Bacteria"/>
</dbReference>
<dbReference type="HOGENOM" id="CLU_013734_2_2_6"/>
<dbReference type="OrthoDB" id="9809354at2"/>
<dbReference type="Proteomes" id="UP000008871">
    <property type="component" value="Chromosome"/>
</dbReference>
<dbReference type="GO" id="GO:0005737">
    <property type="term" value="C:cytoplasm"/>
    <property type="evidence" value="ECO:0007669"/>
    <property type="project" value="UniProtKB-SubCell"/>
</dbReference>
<dbReference type="GO" id="GO:0030145">
    <property type="term" value="F:manganese ion binding"/>
    <property type="evidence" value="ECO:0007669"/>
    <property type="project" value="UniProtKB-UniRule"/>
</dbReference>
<dbReference type="GO" id="GO:0070006">
    <property type="term" value="F:metalloaminopeptidase activity"/>
    <property type="evidence" value="ECO:0007669"/>
    <property type="project" value="InterPro"/>
</dbReference>
<dbReference type="GO" id="GO:0006508">
    <property type="term" value="P:proteolysis"/>
    <property type="evidence" value="ECO:0007669"/>
    <property type="project" value="UniProtKB-KW"/>
</dbReference>
<dbReference type="CDD" id="cd00433">
    <property type="entry name" value="Peptidase_M17"/>
    <property type="match status" value="1"/>
</dbReference>
<dbReference type="Gene3D" id="3.40.220.10">
    <property type="entry name" value="Leucine Aminopeptidase, subunit E, domain 1"/>
    <property type="match status" value="1"/>
</dbReference>
<dbReference type="Gene3D" id="3.40.630.10">
    <property type="entry name" value="Zn peptidases"/>
    <property type="match status" value="1"/>
</dbReference>
<dbReference type="HAMAP" id="MF_00181">
    <property type="entry name" value="Cytosol_peptidase_M17"/>
    <property type="match status" value="1"/>
</dbReference>
<dbReference type="InterPro" id="IPR011356">
    <property type="entry name" value="Leucine_aapep/pepB"/>
</dbReference>
<dbReference type="InterPro" id="IPR043472">
    <property type="entry name" value="Macro_dom-like"/>
</dbReference>
<dbReference type="InterPro" id="IPR000819">
    <property type="entry name" value="Peptidase_M17_C"/>
</dbReference>
<dbReference type="InterPro" id="IPR023042">
    <property type="entry name" value="Peptidase_M17_leu_NH2_pept"/>
</dbReference>
<dbReference type="InterPro" id="IPR008283">
    <property type="entry name" value="Peptidase_M17_N"/>
</dbReference>
<dbReference type="NCBIfam" id="NF002073">
    <property type="entry name" value="PRK00913.1-2"/>
    <property type="match status" value="1"/>
</dbReference>
<dbReference type="NCBIfam" id="NF002074">
    <property type="entry name" value="PRK00913.1-4"/>
    <property type="match status" value="1"/>
</dbReference>
<dbReference type="NCBIfam" id="NF002077">
    <property type="entry name" value="PRK00913.2-4"/>
    <property type="match status" value="1"/>
</dbReference>
<dbReference type="PANTHER" id="PTHR11963:SF23">
    <property type="entry name" value="CYTOSOL AMINOPEPTIDASE"/>
    <property type="match status" value="1"/>
</dbReference>
<dbReference type="PANTHER" id="PTHR11963">
    <property type="entry name" value="LEUCINE AMINOPEPTIDASE-RELATED"/>
    <property type="match status" value="1"/>
</dbReference>
<dbReference type="Pfam" id="PF00883">
    <property type="entry name" value="Peptidase_M17"/>
    <property type="match status" value="1"/>
</dbReference>
<dbReference type="Pfam" id="PF02789">
    <property type="entry name" value="Peptidase_M17_N"/>
    <property type="match status" value="1"/>
</dbReference>
<dbReference type="PRINTS" id="PR00481">
    <property type="entry name" value="LAMNOPPTDASE"/>
</dbReference>
<dbReference type="SUPFAM" id="SSF52949">
    <property type="entry name" value="Macro domain-like"/>
    <property type="match status" value="1"/>
</dbReference>
<dbReference type="SUPFAM" id="SSF53187">
    <property type="entry name" value="Zn-dependent exopeptidases"/>
    <property type="match status" value="1"/>
</dbReference>
<dbReference type="PROSITE" id="PS00631">
    <property type="entry name" value="CYTOSOL_AP"/>
    <property type="match status" value="1"/>
</dbReference>
<gene>
    <name evidence="1" type="primary">pepA</name>
    <name type="ordered locus">ABO_0495</name>
</gene>